<feature type="chain" id="PRO_1000077038" description="3-dehydroquinate dehydratase">
    <location>
        <begin position="1"/>
        <end position="145"/>
    </location>
</feature>
<feature type="active site" description="Proton acceptor" evidence="1">
    <location>
        <position position="22"/>
    </location>
</feature>
<feature type="active site" description="Proton donor" evidence="1">
    <location>
        <position position="97"/>
    </location>
</feature>
<feature type="binding site" evidence="1">
    <location>
        <position position="71"/>
    </location>
    <ligand>
        <name>substrate</name>
    </ligand>
</feature>
<feature type="binding site" evidence="1">
    <location>
        <position position="77"/>
    </location>
    <ligand>
        <name>substrate</name>
    </ligand>
</feature>
<feature type="binding site" evidence="1">
    <location>
        <position position="84"/>
    </location>
    <ligand>
        <name>substrate</name>
    </ligand>
</feature>
<feature type="binding site" evidence="1">
    <location>
        <begin position="98"/>
        <end position="99"/>
    </location>
    <ligand>
        <name>substrate</name>
    </ligand>
</feature>
<feature type="binding site" evidence="1">
    <location>
        <position position="108"/>
    </location>
    <ligand>
        <name>substrate</name>
    </ligand>
</feature>
<feature type="site" description="Transition state stabilizer" evidence="1">
    <location>
        <position position="17"/>
    </location>
</feature>
<keyword id="KW-0028">Amino-acid biosynthesis</keyword>
<keyword id="KW-0057">Aromatic amino acid biosynthesis</keyword>
<keyword id="KW-0456">Lyase</keyword>
<organism>
    <name type="scientific">Francisella tularensis subsp. novicida (strain U112)</name>
    <dbReference type="NCBI Taxonomy" id="401614"/>
    <lineage>
        <taxon>Bacteria</taxon>
        <taxon>Pseudomonadati</taxon>
        <taxon>Pseudomonadota</taxon>
        <taxon>Gammaproteobacteria</taxon>
        <taxon>Thiotrichales</taxon>
        <taxon>Francisellaceae</taxon>
        <taxon>Francisella</taxon>
    </lineage>
</organism>
<proteinExistence type="inferred from homology"/>
<evidence type="ECO:0000255" key="1">
    <source>
        <dbReference type="HAMAP-Rule" id="MF_00169"/>
    </source>
</evidence>
<protein>
    <recommendedName>
        <fullName evidence="1">3-dehydroquinate dehydratase</fullName>
        <shortName evidence="1">3-dehydroquinase</shortName>
        <ecNumber evidence="1">4.2.1.10</ecNumber>
    </recommendedName>
    <alternativeName>
        <fullName evidence="1">Type II DHQase</fullName>
    </alternativeName>
</protein>
<accession>A0Q5E2</accession>
<reference key="1">
    <citation type="journal article" date="2007" name="Genome Biol.">
        <title>Comparison of Francisella tularensis genomes reveals evolutionary events associated with the emergence of human pathogenic strains.</title>
        <authorList>
            <person name="Rohmer L."/>
            <person name="Fong C."/>
            <person name="Abmayr S."/>
            <person name="Wasnick M."/>
            <person name="Larson Freeman T.J."/>
            <person name="Radey M."/>
            <person name="Guina T."/>
            <person name="Svensson K."/>
            <person name="Hayden H.S."/>
            <person name="Jacobs M."/>
            <person name="Gallagher L.A."/>
            <person name="Manoil C."/>
            <person name="Ernst R.K."/>
            <person name="Drees B."/>
            <person name="Buckley D."/>
            <person name="Haugen E."/>
            <person name="Bovee D."/>
            <person name="Zhou Y."/>
            <person name="Chang J."/>
            <person name="Levy R."/>
            <person name="Lim R."/>
            <person name="Gillett W."/>
            <person name="Guenthener D."/>
            <person name="Kang A."/>
            <person name="Shaffer S.A."/>
            <person name="Taylor G."/>
            <person name="Chen J."/>
            <person name="Gallis B."/>
            <person name="D'Argenio D.A."/>
            <person name="Forsman M."/>
            <person name="Olson M.V."/>
            <person name="Goodlett D.R."/>
            <person name="Kaul R."/>
            <person name="Miller S.I."/>
            <person name="Brittnacher M.J."/>
        </authorList>
    </citation>
    <scope>NUCLEOTIDE SEQUENCE [LARGE SCALE GENOMIC DNA]</scope>
    <source>
        <strain>U112</strain>
    </source>
</reference>
<gene>
    <name evidence="1" type="primary">aroQ</name>
    <name type="ordered locus">FTN_0562</name>
</gene>
<name>AROQ_FRATN</name>
<dbReference type="EC" id="4.2.1.10" evidence="1"/>
<dbReference type="EMBL" id="CP000439">
    <property type="protein sequence ID" value="ABK89457.1"/>
    <property type="molecule type" value="Genomic_DNA"/>
</dbReference>
<dbReference type="RefSeq" id="WP_003016972.1">
    <property type="nucleotide sequence ID" value="NZ_CP009633.1"/>
</dbReference>
<dbReference type="SMR" id="A0Q5E2"/>
<dbReference type="GeneID" id="75263952"/>
<dbReference type="KEGG" id="ftn:FTN_0562"/>
<dbReference type="KEGG" id="ftx:AW25_1467"/>
<dbReference type="BioCyc" id="FTUL401614:G1G75-584-MONOMER"/>
<dbReference type="UniPathway" id="UPA00053">
    <property type="reaction ID" value="UER00086"/>
</dbReference>
<dbReference type="Proteomes" id="UP000000762">
    <property type="component" value="Chromosome"/>
</dbReference>
<dbReference type="GO" id="GO:0003855">
    <property type="term" value="F:3-dehydroquinate dehydratase activity"/>
    <property type="evidence" value="ECO:0007669"/>
    <property type="project" value="UniProtKB-UniRule"/>
</dbReference>
<dbReference type="GO" id="GO:0008652">
    <property type="term" value="P:amino acid biosynthetic process"/>
    <property type="evidence" value="ECO:0007669"/>
    <property type="project" value="UniProtKB-KW"/>
</dbReference>
<dbReference type="GO" id="GO:0009073">
    <property type="term" value="P:aromatic amino acid family biosynthetic process"/>
    <property type="evidence" value="ECO:0007669"/>
    <property type="project" value="UniProtKB-KW"/>
</dbReference>
<dbReference type="GO" id="GO:0009423">
    <property type="term" value="P:chorismate biosynthetic process"/>
    <property type="evidence" value="ECO:0007669"/>
    <property type="project" value="UniProtKB-UniRule"/>
</dbReference>
<dbReference type="GO" id="GO:0019631">
    <property type="term" value="P:quinate catabolic process"/>
    <property type="evidence" value="ECO:0007669"/>
    <property type="project" value="TreeGrafter"/>
</dbReference>
<dbReference type="CDD" id="cd00466">
    <property type="entry name" value="DHQase_II"/>
    <property type="match status" value="1"/>
</dbReference>
<dbReference type="Gene3D" id="3.40.50.9100">
    <property type="entry name" value="Dehydroquinase, class II"/>
    <property type="match status" value="1"/>
</dbReference>
<dbReference type="HAMAP" id="MF_00169">
    <property type="entry name" value="AroQ"/>
    <property type="match status" value="1"/>
</dbReference>
<dbReference type="InterPro" id="IPR001874">
    <property type="entry name" value="DHquinase_II"/>
</dbReference>
<dbReference type="InterPro" id="IPR018509">
    <property type="entry name" value="DHquinase_II_CS"/>
</dbReference>
<dbReference type="InterPro" id="IPR036441">
    <property type="entry name" value="DHquinase_II_sf"/>
</dbReference>
<dbReference type="NCBIfam" id="TIGR01088">
    <property type="entry name" value="aroQ"/>
    <property type="match status" value="1"/>
</dbReference>
<dbReference type="NCBIfam" id="NF003804">
    <property type="entry name" value="PRK05395.1-1"/>
    <property type="match status" value="1"/>
</dbReference>
<dbReference type="NCBIfam" id="NF003805">
    <property type="entry name" value="PRK05395.1-2"/>
    <property type="match status" value="1"/>
</dbReference>
<dbReference type="NCBIfam" id="NF003806">
    <property type="entry name" value="PRK05395.1-3"/>
    <property type="match status" value="1"/>
</dbReference>
<dbReference type="NCBIfam" id="NF003807">
    <property type="entry name" value="PRK05395.1-4"/>
    <property type="match status" value="1"/>
</dbReference>
<dbReference type="PANTHER" id="PTHR21272">
    <property type="entry name" value="CATABOLIC 3-DEHYDROQUINASE"/>
    <property type="match status" value="1"/>
</dbReference>
<dbReference type="PANTHER" id="PTHR21272:SF3">
    <property type="entry name" value="CATABOLIC 3-DEHYDROQUINASE"/>
    <property type="match status" value="1"/>
</dbReference>
<dbReference type="Pfam" id="PF01220">
    <property type="entry name" value="DHquinase_II"/>
    <property type="match status" value="1"/>
</dbReference>
<dbReference type="PIRSF" id="PIRSF001399">
    <property type="entry name" value="DHquinase_II"/>
    <property type="match status" value="1"/>
</dbReference>
<dbReference type="SUPFAM" id="SSF52304">
    <property type="entry name" value="Type II 3-dehydroquinate dehydratase"/>
    <property type="match status" value="1"/>
</dbReference>
<dbReference type="PROSITE" id="PS01029">
    <property type="entry name" value="DEHYDROQUINASE_II"/>
    <property type="match status" value="1"/>
</dbReference>
<sequence>MDVLVINGPNLNLLGTRQPQFYGHKTLADINNDLLKIAKENNINIDFYQSNHEGQIIDKIQQTAAKIIIINPAAFTHTSVAIRDAFLAINKPFIEIHLSNIYNREEFRTKSFLSDIAYGCIFGFGPNGYTLALIEAINYINMKGE</sequence>
<comment type="function">
    <text evidence="1">Catalyzes a trans-dehydration via an enolate intermediate.</text>
</comment>
<comment type="catalytic activity">
    <reaction evidence="1">
        <text>3-dehydroquinate = 3-dehydroshikimate + H2O</text>
        <dbReference type="Rhea" id="RHEA:21096"/>
        <dbReference type="ChEBI" id="CHEBI:15377"/>
        <dbReference type="ChEBI" id="CHEBI:16630"/>
        <dbReference type="ChEBI" id="CHEBI:32364"/>
        <dbReference type="EC" id="4.2.1.10"/>
    </reaction>
</comment>
<comment type="pathway">
    <text evidence="1">Metabolic intermediate biosynthesis; chorismate biosynthesis; chorismate from D-erythrose 4-phosphate and phosphoenolpyruvate: step 3/7.</text>
</comment>
<comment type="subunit">
    <text evidence="1">Homododecamer.</text>
</comment>
<comment type="similarity">
    <text evidence="1">Belongs to the type-II 3-dehydroquinase family.</text>
</comment>